<gene>
    <name evidence="1" type="primary">rimO</name>
    <name type="ordered locus">Csac_2141</name>
</gene>
<protein>
    <recommendedName>
        <fullName evidence="1">Ribosomal protein uS12 methylthiotransferase RimO</fullName>
        <shortName evidence="1">uS12 MTTase</shortName>
        <shortName evidence="1">uS12 methylthiotransferase</shortName>
        <ecNumber evidence="1">2.8.4.4</ecNumber>
    </recommendedName>
    <alternativeName>
        <fullName evidence="1">Ribosomal protein uS12 (aspartate-C(3))-methylthiotransferase</fullName>
    </alternativeName>
    <alternativeName>
        <fullName evidence="1">Ribosome maturation factor RimO</fullName>
    </alternativeName>
</protein>
<dbReference type="EC" id="2.8.4.4" evidence="1"/>
<dbReference type="EMBL" id="CP000679">
    <property type="protein sequence ID" value="ABP67724.1"/>
    <property type="molecule type" value="Genomic_DNA"/>
</dbReference>
<dbReference type="RefSeq" id="WP_011917655.1">
    <property type="nucleotide sequence ID" value="NC_009437.1"/>
</dbReference>
<dbReference type="SMR" id="A4XLD9"/>
<dbReference type="STRING" id="351627.Csac_2141"/>
<dbReference type="KEGG" id="csc:Csac_2141"/>
<dbReference type="eggNOG" id="COG0621">
    <property type="taxonomic scope" value="Bacteria"/>
</dbReference>
<dbReference type="HOGENOM" id="CLU_018697_0_1_9"/>
<dbReference type="OrthoDB" id="9805215at2"/>
<dbReference type="Proteomes" id="UP000000256">
    <property type="component" value="Chromosome"/>
</dbReference>
<dbReference type="GO" id="GO:0005829">
    <property type="term" value="C:cytosol"/>
    <property type="evidence" value="ECO:0007669"/>
    <property type="project" value="TreeGrafter"/>
</dbReference>
<dbReference type="GO" id="GO:0051539">
    <property type="term" value="F:4 iron, 4 sulfur cluster binding"/>
    <property type="evidence" value="ECO:0007669"/>
    <property type="project" value="UniProtKB-UniRule"/>
</dbReference>
<dbReference type="GO" id="GO:0035599">
    <property type="term" value="F:aspartic acid methylthiotransferase activity"/>
    <property type="evidence" value="ECO:0007669"/>
    <property type="project" value="TreeGrafter"/>
</dbReference>
<dbReference type="GO" id="GO:0046872">
    <property type="term" value="F:metal ion binding"/>
    <property type="evidence" value="ECO:0007669"/>
    <property type="project" value="UniProtKB-KW"/>
</dbReference>
<dbReference type="GO" id="GO:0103039">
    <property type="term" value="F:protein methylthiotransferase activity"/>
    <property type="evidence" value="ECO:0007669"/>
    <property type="project" value="UniProtKB-EC"/>
</dbReference>
<dbReference type="GO" id="GO:0006400">
    <property type="term" value="P:tRNA modification"/>
    <property type="evidence" value="ECO:0007669"/>
    <property type="project" value="InterPro"/>
</dbReference>
<dbReference type="CDD" id="cd01335">
    <property type="entry name" value="Radical_SAM"/>
    <property type="match status" value="1"/>
</dbReference>
<dbReference type="FunFam" id="3.40.50.12160:FF:000003">
    <property type="entry name" value="CDK5 regulatory subunit-associated protein 1"/>
    <property type="match status" value="1"/>
</dbReference>
<dbReference type="FunFam" id="3.80.30.20:FF:000001">
    <property type="entry name" value="tRNA-2-methylthio-N(6)-dimethylallyladenosine synthase 2"/>
    <property type="match status" value="1"/>
</dbReference>
<dbReference type="Gene3D" id="3.40.50.12160">
    <property type="entry name" value="Methylthiotransferase, N-terminal domain"/>
    <property type="match status" value="1"/>
</dbReference>
<dbReference type="Gene3D" id="2.40.50.140">
    <property type="entry name" value="Nucleic acid-binding proteins"/>
    <property type="match status" value="1"/>
</dbReference>
<dbReference type="Gene3D" id="3.80.30.20">
    <property type="entry name" value="tm_1862 like domain"/>
    <property type="match status" value="1"/>
</dbReference>
<dbReference type="HAMAP" id="MF_01865">
    <property type="entry name" value="MTTase_RimO"/>
    <property type="match status" value="1"/>
</dbReference>
<dbReference type="InterPro" id="IPR006638">
    <property type="entry name" value="Elp3/MiaA/NifB-like_rSAM"/>
</dbReference>
<dbReference type="InterPro" id="IPR005839">
    <property type="entry name" value="Methylthiotransferase"/>
</dbReference>
<dbReference type="InterPro" id="IPR020612">
    <property type="entry name" value="Methylthiotransferase_CS"/>
</dbReference>
<dbReference type="InterPro" id="IPR013848">
    <property type="entry name" value="Methylthiotransferase_N"/>
</dbReference>
<dbReference type="InterPro" id="IPR038135">
    <property type="entry name" value="Methylthiotransferase_N_sf"/>
</dbReference>
<dbReference type="InterPro" id="IPR012340">
    <property type="entry name" value="NA-bd_OB-fold"/>
</dbReference>
<dbReference type="InterPro" id="IPR005840">
    <property type="entry name" value="Ribosomal_uS12_MeSTrfase_RimO"/>
</dbReference>
<dbReference type="InterPro" id="IPR007197">
    <property type="entry name" value="rSAM"/>
</dbReference>
<dbReference type="InterPro" id="IPR023404">
    <property type="entry name" value="rSAM_horseshoe"/>
</dbReference>
<dbReference type="InterPro" id="IPR002792">
    <property type="entry name" value="TRAM_dom"/>
</dbReference>
<dbReference type="NCBIfam" id="TIGR01125">
    <property type="entry name" value="30S ribosomal protein S12 methylthiotransferase RimO"/>
    <property type="match status" value="1"/>
</dbReference>
<dbReference type="NCBIfam" id="TIGR00089">
    <property type="entry name" value="MiaB/RimO family radical SAM methylthiotransferase"/>
    <property type="match status" value="1"/>
</dbReference>
<dbReference type="PANTHER" id="PTHR43837">
    <property type="entry name" value="RIBOSOMAL PROTEIN S12 METHYLTHIOTRANSFERASE RIMO"/>
    <property type="match status" value="1"/>
</dbReference>
<dbReference type="PANTHER" id="PTHR43837:SF1">
    <property type="entry name" value="RIBOSOMAL PROTEIN US12 METHYLTHIOTRANSFERASE RIMO"/>
    <property type="match status" value="1"/>
</dbReference>
<dbReference type="Pfam" id="PF04055">
    <property type="entry name" value="Radical_SAM"/>
    <property type="match status" value="1"/>
</dbReference>
<dbReference type="Pfam" id="PF18693">
    <property type="entry name" value="TRAM_2"/>
    <property type="match status" value="1"/>
</dbReference>
<dbReference type="Pfam" id="PF00919">
    <property type="entry name" value="UPF0004"/>
    <property type="match status" value="1"/>
</dbReference>
<dbReference type="SFLD" id="SFLDG01082">
    <property type="entry name" value="B12-binding_domain_containing"/>
    <property type="match status" value="1"/>
</dbReference>
<dbReference type="SFLD" id="SFLDS00029">
    <property type="entry name" value="Radical_SAM"/>
    <property type="match status" value="1"/>
</dbReference>
<dbReference type="SFLD" id="SFLDF00274">
    <property type="entry name" value="ribosomal_protein_S12_methylth"/>
    <property type="match status" value="1"/>
</dbReference>
<dbReference type="SMART" id="SM00729">
    <property type="entry name" value="Elp3"/>
    <property type="match status" value="1"/>
</dbReference>
<dbReference type="SUPFAM" id="SSF102114">
    <property type="entry name" value="Radical SAM enzymes"/>
    <property type="match status" value="1"/>
</dbReference>
<dbReference type="PROSITE" id="PS51449">
    <property type="entry name" value="MTTASE_N"/>
    <property type="match status" value="1"/>
</dbReference>
<dbReference type="PROSITE" id="PS01278">
    <property type="entry name" value="MTTASE_RADICAL"/>
    <property type="match status" value="1"/>
</dbReference>
<dbReference type="PROSITE" id="PS51918">
    <property type="entry name" value="RADICAL_SAM"/>
    <property type="match status" value="1"/>
</dbReference>
<dbReference type="PROSITE" id="PS50926">
    <property type="entry name" value="TRAM"/>
    <property type="match status" value="1"/>
</dbReference>
<sequence length="440" mass="50843">MVKVGFVSLGCNKNLVDSEIMMGACKEAGFEITPNAEDADVIVINTCGFINDAKQESIDTILEMAEYKNKKCKFLIVTGCLSQRYKDDILKELPEVDAILGVKEMLKLPNVIKKLYEGESKLQVFDDKPTFVYTSSMPRLIATPKFYAYIKIAEGCNNRCSYCSIPLIRGNYTSRYIDDIIQEARKLSEDGYKEIVLTAQDTTKYGIDIYQKKMLATLLQKLSEIDNIKWIRFLYSYPEDIDDELLNIVKSLPKVVKYFDIPIQHINNRILKLMNRKTSSEGIKELIQRIRSAFDEVVIRTTVMVGFPTESEDEFEELYEFVKWAKFDRLGAFMYSQEEGTPAADLPQTDDETKVKRYERILNLQRKISLERNRKRISKKYEVVIEGRDRNNFYIARSQFEAPEVDGKIIVFSKRKLLPGEFVVVKILDAFEYDLVGEVI</sequence>
<feature type="chain" id="PRO_0000374749" description="Ribosomal protein uS12 methylthiotransferase RimO">
    <location>
        <begin position="1"/>
        <end position="440"/>
    </location>
</feature>
<feature type="domain" description="MTTase N-terminal" evidence="1">
    <location>
        <begin position="2"/>
        <end position="117"/>
    </location>
</feature>
<feature type="domain" description="Radical SAM core" evidence="2">
    <location>
        <begin position="142"/>
        <end position="371"/>
    </location>
</feature>
<feature type="domain" description="TRAM" evidence="1">
    <location>
        <begin position="374"/>
        <end position="440"/>
    </location>
</feature>
<feature type="binding site" evidence="1">
    <location>
        <position position="11"/>
    </location>
    <ligand>
        <name>[4Fe-4S] cluster</name>
        <dbReference type="ChEBI" id="CHEBI:49883"/>
        <label>1</label>
    </ligand>
</feature>
<feature type="binding site" evidence="1">
    <location>
        <position position="47"/>
    </location>
    <ligand>
        <name>[4Fe-4S] cluster</name>
        <dbReference type="ChEBI" id="CHEBI:49883"/>
        <label>1</label>
    </ligand>
</feature>
<feature type="binding site" evidence="1">
    <location>
        <position position="80"/>
    </location>
    <ligand>
        <name>[4Fe-4S] cluster</name>
        <dbReference type="ChEBI" id="CHEBI:49883"/>
        <label>1</label>
    </ligand>
</feature>
<feature type="binding site" evidence="1">
    <location>
        <position position="156"/>
    </location>
    <ligand>
        <name>[4Fe-4S] cluster</name>
        <dbReference type="ChEBI" id="CHEBI:49883"/>
        <label>2</label>
        <note>4Fe-4S-S-AdoMet</note>
    </ligand>
</feature>
<feature type="binding site" evidence="1">
    <location>
        <position position="160"/>
    </location>
    <ligand>
        <name>[4Fe-4S] cluster</name>
        <dbReference type="ChEBI" id="CHEBI:49883"/>
        <label>2</label>
        <note>4Fe-4S-S-AdoMet</note>
    </ligand>
</feature>
<feature type="binding site" evidence="1">
    <location>
        <position position="163"/>
    </location>
    <ligand>
        <name>[4Fe-4S] cluster</name>
        <dbReference type="ChEBI" id="CHEBI:49883"/>
        <label>2</label>
        <note>4Fe-4S-S-AdoMet</note>
    </ligand>
</feature>
<proteinExistence type="inferred from homology"/>
<name>RIMO_CALS8</name>
<reference key="1">
    <citation type="submission" date="2007-04" db="EMBL/GenBank/DDBJ databases">
        <title>Genome sequence of the thermophilic hydrogen-producing bacterium Caldicellulosiruptor saccharolyticus DSM 8903.</title>
        <authorList>
            <person name="Copeland A."/>
            <person name="Lucas S."/>
            <person name="Lapidus A."/>
            <person name="Barry K."/>
            <person name="Detter J.C."/>
            <person name="Glavina del Rio T."/>
            <person name="Hammon N."/>
            <person name="Israni S."/>
            <person name="Dalin E."/>
            <person name="Tice H."/>
            <person name="Pitluck S."/>
            <person name="Kiss H."/>
            <person name="Brettin T."/>
            <person name="Bruce D."/>
            <person name="Han C."/>
            <person name="Schmutz J."/>
            <person name="Larimer F."/>
            <person name="Land M."/>
            <person name="Hauser L."/>
            <person name="Kyrpides N."/>
            <person name="Lykidis A."/>
            <person name="van de Werken H.J.G."/>
            <person name="Verhaart M.R.A."/>
            <person name="VanFossen A.L."/>
            <person name="Lewis D.L."/>
            <person name="Nichols J.D."/>
            <person name="Goorissen H.P."/>
            <person name="van Niel E.W.J."/>
            <person name="Stams F.J.M."/>
            <person name="Willquist K.U."/>
            <person name="Ward D.E."/>
            <person name="van der Oost J."/>
            <person name="Kelly R.M."/>
            <person name="Kengen S.M.W."/>
            <person name="Richardson P."/>
        </authorList>
    </citation>
    <scope>NUCLEOTIDE SEQUENCE [LARGE SCALE GENOMIC DNA]</scope>
    <source>
        <strain>ATCC 43494 / DSM 8903 / Tp8T 6331</strain>
    </source>
</reference>
<accession>A4XLD9</accession>
<keyword id="KW-0004">4Fe-4S</keyword>
<keyword id="KW-0963">Cytoplasm</keyword>
<keyword id="KW-0408">Iron</keyword>
<keyword id="KW-0411">Iron-sulfur</keyword>
<keyword id="KW-0479">Metal-binding</keyword>
<keyword id="KW-0949">S-adenosyl-L-methionine</keyword>
<keyword id="KW-0808">Transferase</keyword>
<comment type="function">
    <text evidence="1">Catalyzes the methylthiolation of an aspartic acid residue of ribosomal protein uS12.</text>
</comment>
<comment type="catalytic activity">
    <reaction evidence="1">
        <text>L-aspartate(89)-[ribosomal protein uS12]-hydrogen + (sulfur carrier)-SH + AH2 + 2 S-adenosyl-L-methionine = 3-methylsulfanyl-L-aspartate(89)-[ribosomal protein uS12]-hydrogen + (sulfur carrier)-H + 5'-deoxyadenosine + L-methionine + A + S-adenosyl-L-homocysteine + 2 H(+)</text>
        <dbReference type="Rhea" id="RHEA:37087"/>
        <dbReference type="Rhea" id="RHEA-COMP:10460"/>
        <dbReference type="Rhea" id="RHEA-COMP:10461"/>
        <dbReference type="Rhea" id="RHEA-COMP:14737"/>
        <dbReference type="Rhea" id="RHEA-COMP:14739"/>
        <dbReference type="ChEBI" id="CHEBI:13193"/>
        <dbReference type="ChEBI" id="CHEBI:15378"/>
        <dbReference type="ChEBI" id="CHEBI:17319"/>
        <dbReference type="ChEBI" id="CHEBI:17499"/>
        <dbReference type="ChEBI" id="CHEBI:29917"/>
        <dbReference type="ChEBI" id="CHEBI:29961"/>
        <dbReference type="ChEBI" id="CHEBI:57844"/>
        <dbReference type="ChEBI" id="CHEBI:57856"/>
        <dbReference type="ChEBI" id="CHEBI:59789"/>
        <dbReference type="ChEBI" id="CHEBI:64428"/>
        <dbReference type="ChEBI" id="CHEBI:73599"/>
        <dbReference type="EC" id="2.8.4.4"/>
    </reaction>
</comment>
<comment type="cofactor">
    <cofactor evidence="1">
        <name>[4Fe-4S] cluster</name>
        <dbReference type="ChEBI" id="CHEBI:49883"/>
    </cofactor>
    <text evidence="1">Binds 2 [4Fe-4S] clusters. One cluster is coordinated with 3 cysteines and an exchangeable S-adenosyl-L-methionine.</text>
</comment>
<comment type="subcellular location">
    <subcellularLocation>
        <location evidence="1">Cytoplasm</location>
    </subcellularLocation>
</comment>
<comment type="similarity">
    <text evidence="1">Belongs to the methylthiotransferase family. RimO subfamily.</text>
</comment>
<organism>
    <name type="scientific">Caldicellulosiruptor saccharolyticus (strain ATCC 43494 / DSM 8903 / Tp8T 6331)</name>
    <dbReference type="NCBI Taxonomy" id="351627"/>
    <lineage>
        <taxon>Bacteria</taxon>
        <taxon>Bacillati</taxon>
        <taxon>Bacillota</taxon>
        <taxon>Bacillota incertae sedis</taxon>
        <taxon>Caldicellulosiruptorales</taxon>
        <taxon>Caldicellulosiruptoraceae</taxon>
        <taxon>Caldicellulosiruptor</taxon>
    </lineage>
</organism>
<evidence type="ECO:0000255" key="1">
    <source>
        <dbReference type="HAMAP-Rule" id="MF_01865"/>
    </source>
</evidence>
<evidence type="ECO:0000255" key="2">
    <source>
        <dbReference type="PROSITE-ProRule" id="PRU01266"/>
    </source>
</evidence>